<organism>
    <name type="scientific">Caldivirga maquilingensis (strain ATCC 700844 / DSM 13496 / JCM 10307 / IC-167)</name>
    <dbReference type="NCBI Taxonomy" id="397948"/>
    <lineage>
        <taxon>Archaea</taxon>
        <taxon>Thermoproteota</taxon>
        <taxon>Thermoprotei</taxon>
        <taxon>Thermoproteales</taxon>
        <taxon>Thermoproteaceae</taxon>
        <taxon>Caldivirga</taxon>
    </lineage>
</organism>
<feature type="chain" id="PRO_0000340167" description="Sugar fermentation stimulation protein homolog">
    <location>
        <begin position="1"/>
        <end position="230"/>
    </location>
</feature>
<protein>
    <recommendedName>
        <fullName evidence="1">Sugar fermentation stimulation protein homolog</fullName>
    </recommendedName>
</protein>
<keyword id="KW-1185">Reference proteome</keyword>
<reference key="1">
    <citation type="submission" date="2007-10" db="EMBL/GenBank/DDBJ databases">
        <title>Complete sequence of Caldivirga maquilingensis IC-167.</title>
        <authorList>
            <consortium name="US DOE Joint Genome Institute"/>
            <person name="Copeland A."/>
            <person name="Lucas S."/>
            <person name="Lapidus A."/>
            <person name="Barry K."/>
            <person name="Glavina del Rio T."/>
            <person name="Dalin E."/>
            <person name="Tice H."/>
            <person name="Pitluck S."/>
            <person name="Saunders E."/>
            <person name="Brettin T."/>
            <person name="Bruce D."/>
            <person name="Detter J.C."/>
            <person name="Han C."/>
            <person name="Schmutz J."/>
            <person name="Larimer F."/>
            <person name="Land M."/>
            <person name="Hauser L."/>
            <person name="Kyrpides N."/>
            <person name="Ivanova N."/>
            <person name="Biddle J.F."/>
            <person name="Zhang Z."/>
            <person name="Fitz-Gibbon S.T."/>
            <person name="Lowe T.M."/>
            <person name="Saltikov C."/>
            <person name="House C.H."/>
            <person name="Richardson P."/>
        </authorList>
    </citation>
    <scope>NUCLEOTIDE SEQUENCE [LARGE SCALE GENOMIC DNA]</scope>
    <source>
        <strain>ATCC 700844 / DSM 13496 / JCM 10307 / IC-167</strain>
    </source>
</reference>
<evidence type="ECO:0000255" key="1">
    <source>
        <dbReference type="HAMAP-Rule" id="MF_00095"/>
    </source>
</evidence>
<comment type="similarity">
    <text evidence="1">Belongs to the SfsA family.</text>
</comment>
<sequence length="230" mass="25761">MLGFTINKPDVEGVFIKRINRFLGIGLINGVESLVHIHDPGRLKELLKPGIKFYAYHKDSGKTRFYLTAVDLGNELVLINSAIHNNVAAWLIENGLILKGYEVLRREPRFSGGRFDLMLKSPKGGYTMVEVKGVTLEEDGVAKFPDAPTLRGARHMIKLAKAIEEGYEAYVIFLVLRSNALLFTPNVSLDPRFSNALKYAIEHGVKVLAYKLALTRDWVLLPMGRVNVIL</sequence>
<name>SFSA_CALMQ</name>
<accession>A8MCU7</accession>
<dbReference type="EMBL" id="CP000852">
    <property type="protein sequence ID" value="ABW01603.1"/>
    <property type="molecule type" value="Genomic_DNA"/>
</dbReference>
<dbReference type="RefSeq" id="WP_012185822.1">
    <property type="nucleotide sequence ID" value="NC_009954.1"/>
</dbReference>
<dbReference type="SMR" id="A8MCU7"/>
<dbReference type="STRING" id="397948.Cmaq_0768"/>
<dbReference type="GeneID" id="5708454"/>
<dbReference type="KEGG" id="cma:Cmaq_0768"/>
<dbReference type="eggNOG" id="arCOG04115">
    <property type="taxonomic scope" value="Archaea"/>
</dbReference>
<dbReference type="HOGENOM" id="CLU_052299_1_0_2"/>
<dbReference type="OrthoDB" id="34139at2157"/>
<dbReference type="Proteomes" id="UP000001137">
    <property type="component" value="Chromosome"/>
</dbReference>
<dbReference type="GO" id="GO:0003677">
    <property type="term" value="F:DNA binding"/>
    <property type="evidence" value="ECO:0007669"/>
    <property type="project" value="InterPro"/>
</dbReference>
<dbReference type="Gene3D" id="2.40.50.580">
    <property type="match status" value="1"/>
</dbReference>
<dbReference type="Gene3D" id="3.40.1350.60">
    <property type="match status" value="1"/>
</dbReference>
<dbReference type="HAMAP" id="MF_00095">
    <property type="entry name" value="SfsA"/>
    <property type="match status" value="1"/>
</dbReference>
<dbReference type="InterPro" id="IPR005224">
    <property type="entry name" value="SfsA"/>
</dbReference>
<dbReference type="InterPro" id="IPR040452">
    <property type="entry name" value="SfsA_C"/>
</dbReference>
<dbReference type="InterPro" id="IPR041465">
    <property type="entry name" value="SfsA_N"/>
</dbReference>
<dbReference type="NCBIfam" id="TIGR00230">
    <property type="entry name" value="sfsA"/>
    <property type="match status" value="1"/>
</dbReference>
<dbReference type="PANTHER" id="PTHR30545">
    <property type="entry name" value="SUGAR FERMENTATION STIMULATION PROTEIN A"/>
    <property type="match status" value="1"/>
</dbReference>
<dbReference type="PANTHER" id="PTHR30545:SF2">
    <property type="entry name" value="SUGAR FERMENTATION STIMULATION PROTEIN A"/>
    <property type="match status" value="1"/>
</dbReference>
<dbReference type="Pfam" id="PF03749">
    <property type="entry name" value="SfsA"/>
    <property type="match status" value="1"/>
</dbReference>
<dbReference type="Pfam" id="PF17746">
    <property type="entry name" value="SfsA_N"/>
    <property type="match status" value="1"/>
</dbReference>
<gene>
    <name evidence="1" type="primary">sfsA</name>
    <name type="ordered locus">Cmaq_0768</name>
</gene>
<proteinExistence type="inferred from homology"/>